<name>YL21B_YEAST</name>
<accession>P0C2J3</accession>
<accession>D6VZ45</accession>
<comment type="function">
    <text evidence="1">Capsid protein (CA) is the structural component of the virus-like particle (VLP), forming the shell that encapsulates the retrotransposons dimeric RNA genome. The particles are assembled from trimer-clustered units and there are holes in the capsid shells that allow for the diffusion of macromolecules. CA also has nucleocapsid-like chaperone activity, promoting primer tRNA(i)-Met annealing to the multipartite primer-binding site (PBS), dimerization of Ty2 RNA and initiation of reverse transcription (By similarity).</text>
</comment>
<comment type="function">
    <text evidence="1">The aspartyl protease (PR) mediates the proteolytic cleavages of the Gag and Gag-Pol polyproteins after assembly of the VLP.</text>
</comment>
<comment type="function">
    <text evidence="1">Reverse transcriptase/ribonuclease H (RT) is a multifunctional enzyme that catalyzes the conversion of the retro-elements RNA genome into dsDNA within the VLP. The enzyme displays a DNA polymerase activity that can copy either DNA or RNA templates, and a ribonuclease H (RNase H) activity that cleaves the RNA strand of RNA-DNA heteroduplexes during plus-strand synthesis and hydrolyzes RNA primers. The conversion leads to a linear dsDNA copy of the retrotransposon that includes long terminal repeats (LTRs) at both ends (By similarity).</text>
</comment>
<comment type="function">
    <text evidence="1">Integrase (IN) targets the VLP to the nucleus, where a subparticle preintegration complex (PIC) containing at least integrase and the newly synthesized dsDNA copy of the retrotransposon must transit the nuclear membrane. Once in the nucleus, integrase performs the integration of the dsDNA into the host genome (By similarity).</text>
</comment>
<comment type="catalytic activity">
    <reaction>
        <text>DNA(n) + a 2'-deoxyribonucleoside 5'-triphosphate = DNA(n+1) + diphosphate</text>
        <dbReference type="Rhea" id="RHEA:22508"/>
        <dbReference type="Rhea" id="RHEA-COMP:17339"/>
        <dbReference type="Rhea" id="RHEA-COMP:17340"/>
        <dbReference type="ChEBI" id="CHEBI:33019"/>
        <dbReference type="ChEBI" id="CHEBI:61560"/>
        <dbReference type="ChEBI" id="CHEBI:173112"/>
        <dbReference type="EC" id="2.7.7.49"/>
    </reaction>
</comment>
<comment type="catalytic activity">
    <reaction>
        <text>DNA(n) + a 2'-deoxyribonucleoside 5'-triphosphate = DNA(n+1) + diphosphate</text>
        <dbReference type="Rhea" id="RHEA:22508"/>
        <dbReference type="Rhea" id="RHEA-COMP:17339"/>
        <dbReference type="Rhea" id="RHEA-COMP:17340"/>
        <dbReference type="ChEBI" id="CHEBI:33019"/>
        <dbReference type="ChEBI" id="CHEBI:61560"/>
        <dbReference type="ChEBI" id="CHEBI:173112"/>
        <dbReference type="EC" id="2.7.7.7"/>
    </reaction>
</comment>
<comment type="catalytic activity">
    <reaction>
        <text>Endonucleolytic cleavage to 5'-phosphomonoester.</text>
        <dbReference type="EC" id="3.1.26.4"/>
    </reaction>
</comment>
<comment type="subunit">
    <text evidence="1">The capsid protein forms a homotrimer, from which the VLPs are assembled. The protease is a homodimer, whose active site consists of two apposed aspartic acid residues (By similarity).</text>
</comment>
<comment type="subcellular location">
    <subcellularLocation>
        <location>Cytoplasm</location>
    </subcellularLocation>
    <subcellularLocation>
        <location evidence="1">Nucleus</location>
    </subcellularLocation>
</comment>
<comment type="alternative products">
    <event type="ribosomal frameshifting"/>
    <isoform>
        <id>P0C2J3-1</id>
        <name>Transposon Ty2-LR1 Gag-Pol polyprotein</name>
        <sequence type="displayed"/>
    </isoform>
    <isoform>
        <id>P0C2J4-1</id>
        <name>Transposon Ty2-LR1 Gag polyprotein</name>
        <sequence type="external"/>
    </isoform>
    <text>The Gag-Pol polyprotein is generated by a +1 ribosomal frameshift.</text>
</comment>
<comment type="domain">
    <text evidence="1">The C-terminal RNA-binding region of CA is sufficient for all its nucleocapsid-like chaperone activities.</text>
</comment>
<comment type="domain">
    <text evidence="1">Integrase core domain contains the D-x(n)-D-x(35)-E motif, named for the phylogenetically conserved glutamic acid and aspartic acid residues and the invariant 35 amino acid spacing between the second and third acidic residues. Each acidic residue of the D,D(35)E motif is independently essential for the 3'-processing and strand transfer activities of purified integrase protein (By similarity).</text>
</comment>
<comment type="PTM">
    <text evidence="1">Initially, virus-like particles (VLPs) are composed of the structural unprocessed proteins Gag and Gag-Pol, and also contain the host initiator methionine tRNA (tRNA(i)-Met) which serves as a primer for minus-strand DNA synthesis, and a dimer of genomic Ty RNA. Processing of the polyproteins occurs within the particle and proceeds by an ordered pathway, called maturation. First, the protease (PR) is released by autocatalytic cleavage of the Gag-Pol polyprotein, and this cleavage is a prerequisite for subsequent processing at the remaining sites to release the mature structural and catalytic proteins. Maturation takes place prior to the RT reaction and is required to produce transposition-competent VLPs (By similarity).</text>
</comment>
<comment type="miscellaneous">
    <text>Retrotransposons are mobile genetic entities that are able to replicate via an RNA intermediate and a reverse transcription step. In contrast to retroviruses, retrotransposons are non-infectious, lack an envelope and remain intracellular. Ty2 retrotransposons belong to the copia elements (pseudoviridae).</text>
</comment>
<comment type="miscellaneous">
    <molecule>Isoform Transposon Ty2-LR1 Gag-Pol polyprotein</molecule>
    <text>Produced by +1 ribosomal frameshifting between codon Leu-431 and Gly-432 of the YLR410W-A ORF.</text>
</comment>
<gene>
    <name type="primary">TY2B-LR1</name>
    <name type="synonym">YLRWTy2-1 POL</name>
    <name type="ordered locus">YLR410W-B</name>
    <name type="ORF">L9931.7b</name>
</gene>
<evidence type="ECO:0000250" key="1"/>
<evidence type="ECO:0000255" key="2">
    <source>
        <dbReference type="PROSITE-ProRule" id="PRU00457"/>
    </source>
</evidence>
<evidence type="ECO:0000256" key="3">
    <source>
        <dbReference type="SAM" id="MobiDB-lite"/>
    </source>
</evidence>
<reference key="1">
    <citation type="journal article" date="1997" name="Nature">
        <title>The nucleotide sequence of Saccharomyces cerevisiae chromosome XII.</title>
        <authorList>
            <person name="Johnston M."/>
            <person name="Hillier L.W."/>
            <person name="Riles L."/>
            <person name="Albermann K."/>
            <person name="Andre B."/>
            <person name="Ansorge W."/>
            <person name="Benes V."/>
            <person name="Brueckner M."/>
            <person name="Delius H."/>
            <person name="Dubois E."/>
            <person name="Duesterhoeft A."/>
            <person name="Entian K.-D."/>
            <person name="Floeth M."/>
            <person name="Goffeau A."/>
            <person name="Hebling U."/>
            <person name="Heumann K."/>
            <person name="Heuss-Neitzel D."/>
            <person name="Hilbert H."/>
            <person name="Hilger F."/>
            <person name="Kleine K."/>
            <person name="Koetter P."/>
            <person name="Louis E.J."/>
            <person name="Messenguy F."/>
            <person name="Mewes H.-W."/>
            <person name="Miosga T."/>
            <person name="Moestl D."/>
            <person name="Mueller-Auer S."/>
            <person name="Nentwich U."/>
            <person name="Obermaier B."/>
            <person name="Piravandi E."/>
            <person name="Pohl T.M."/>
            <person name="Portetelle D."/>
            <person name="Purnelle B."/>
            <person name="Rechmann S."/>
            <person name="Rieger M."/>
            <person name="Rinke M."/>
            <person name="Rose M."/>
            <person name="Scharfe M."/>
            <person name="Scherens B."/>
            <person name="Scholler P."/>
            <person name="Schwager C."/>
            <person name="Schwarz S."/>
            <person name="Underwood A.P."/>
            <person name="Urrestarazu L.A."/>
            <person name="Vandenbol M."/>
            <person name="Verhasselt P."/>
            <person name="Vierendeels F."/>
            <person name="Voet M."/>
            <person name="Volckaert G."/>
            <person name="Voss H."/>
            <person name="Wambutt R."/>
            <person name="Wedler E."/>
            <person name="Wedler H."/>
            <person name="Zimmermann F.K."/>
            <person name="Zollner A."/>
            <person name="Hani J."/>
            <person name="Hoheisel J.D."/>
        </authorList>
    </citation>
    <scope>NUCLEOTIDE SEQUENCE [LARGE SCALE GENOMIC DNA]</scope>
    <source>
        <strain>ATCC 204508 / S288c</strain>
    </source>
</reference>
<reference key="2">
    <citation type="journal article" date="2014" name="G3 (Bethesda)">
        <title>The reference genome sequence of Saccharomyces cerevisiae: Then and now.</title>
        <authorList>
            <person name="Engel S.R."/>
            <person name="Dietrich F.S."/>
            <person name="Fisk D.G."/>
            <person name="Binkley G."/>
            <person name="Balakrishnan R."/>
            <person name="Costanzo M.C."/>
            <person name="Dwight S.S."/>
            <person name="Hitz B.C."/>
            <person name="Karra K."/>
            <person name="Nash R.S."/>
            <person name="Weng S."/>
            <person name="Wong E.D."/>
            <person name="Lloyd P."/>
            <person name="Skrzypek M.S."/>
            <person name="Miyasato S.R."/>
            <person name="Simison M."/>
            <person name="Cherry J.M."/>
        </authorList>
    </citation>
    <scope>GENOME REANNOTATION</scope>
    <source>
        <strain>ATCC 204508 / S288c</strain>
    </source>
</reference>
<reference key="3">
    <citation type="journal article" date="1998" name="Genome Res.">
        <title>Transposable elements and genome organization: a comprehensive survey of retrotransposons revealed by the complete Saccharomyces cerevisiae genome sequence.</title>
        <authorList>
            <person name="Kim J.M."/>
            <person name="Vanguri S."/>
            <person name="Boeke J.D."/>
            <person name="Gabriel A."/>
            <person name="Voytas D.F."/>
        </authorList>
    </citation>
    <scope>NOMENCLATURE</scope>
</reference>
<reference key="4">
    <citation type="journal article" date="2005" name="Cytogenet. Genome Res.">
        <title>Happy together: the life and times of Ty retrotransposons and their hosts.</title>
        <authorList>
            <person name="Lesage P."/>
            <person name="Todeschini A.L."/>
        </authorList>
    </citation>
    <scope>REVIEW</scope>
</reference>
<proteinExistence type="inferred from homology"/>
<sequence>MESQQLHQNPHSLHGSAYASVTSKEVPSNQDPLAVSASNLPEFDRDSTKVNSQQETTPGTSAVPENHHHVSPQPASVPPPQNGQYQQHGMMTPNKAMASNWAHYQQPSMMTCSHYQTSPAYYQPDPHYPLPQYIPPLSTSSPDPIDLKNQHSEIPQAKTKVGNNVLPPHTLTSEENFSTWVKFYIRFLKNSNLGDIIPNDQGEIKRQMTYEEHAYIYNTFQAFAPFHLLPTWVKQILEINYADILTVLCKSVSKMQTNNQELKDWIALANLEYDGSTSADTFEITVSTIIQRLKENNINVSDRLACQLILKGLSGDFKYLRNQYRTKTNMKLSQLFAEIQLIYDENKIMNLNKPSQYKQHSEYKNVSRTSPNTTNTKVTTRNYHRTNSSKPRAAKAHNIATSSKFSRVNNDHINESTVSSQYLSDDNELSLGQQQKESKPTHTIDSNDELPDHLLIDSGASQTLVRSAHYLHHATPNSEINIVDAQKQDIPINAIGNLHFNFQNGTKTSIKALHTPNIAYDLLSLSELANQNITACFTRNTLERSDGTVLAPIVKHGDFYWLSKKYLIPSHISKLTINNVNKSKSVNKYPYPLIHRMLGHANFRSIQKSLKKNAVTYLKESDIEWSNASTYQCPDCLIGKSTKHRHVKGSRLKYQESYEPFQYLHTDIFGPVHHLPKSAPSYFISFTDEKTRFQWVYPLHDRREESILNVFTSILAFIKNQFNARVLVIQMDRGSEYTNKTLHKFFTNRGITACYTTTADSRAHGVAERLNRTLLNDCRTLLHCSGLPNHLWFSAVEFSTIIRNSLVSPKNDKSARQHAGLAGLDITTILPFGQPVIVNNHNPDSKIHPRGIPGYALHPSRNSYGYIIYLPSLKKTVDTTNYVILQDNQSKLDQFNYDTLTFDDDLNRLTAHNQSFIEQNETEQSYDQNTESDHDYQSEIEINSDPLVNDFSSQSMNPLQLDHEPVQKVRAPKEVDADISEYNILPSPVRSRTPHIINKESTEMGGTIESDTTSPRHSSTFTARNQKRPGSPNDMIDLTSQDRVNYGLENIKTTRLGGTEEPYIQRNSDTNIKYRTTNSTPSIDDRSSNSESTTPIISIETKAVCDNTPSIDTDPPEYRSSDHATPNIMPDKSSKNVTADSILDDLPLPDLTHKSPTDTSDVSKDIPHIHSRQTNSSLGGMDDSNVLTTTKSKKRSLEDNETEIEVSRDTWNNKNMRSLEPPRSKKRINLIAAIKGVKSIKPVRTTLRYDEAITYNKDNKEKDRYVEAYHKEISQLLKMNTWDTNKYYDRNDIDPKKVINSMFIFNKKRDGTHKARFVARGDIQHPDTYDSDMQSNTVHHYALMTSLSIALDNDYYITQLDISSAYLYADIKEELYIRPPPHLGLNDKLLRLRKSLYGLKQSGANWYETIKSYLINCCDMQEVRGWSCVFKNSQVTICLFVDDMILFSKDLNANKKIITTLKKQYDTKIINLGERDNEIQYDILGLEIKYQRSKYMKLGMEKSLTEKLPKLNVPLNPKGKKLRAPGQPGHYIDQDELEIDEDEYKEKVHEMQKLIGLASYVGYKFRFDLLYYINTLAQHILFPSRQVLDMTYELIQFMWDTRDKQLIWHKNKPTKPDNKLVAISDASYGNQPYYKSQIGNIFLLNGKVIGGKSTKASLTCTSTTEAEIHAVSEAIPLLNNLSHLVQELNKKPIIKGLLTDSRSTISIIKSTNEEKFRNRFFGTKAMRLRDEVSGNNLYVYYIETKKNIADVMTKPLPIKTFKLLTNKWIH</sequence>
<protein>
    <recommendedName>
        <fullName>Transposon Ty2-LR1 Gag-Pol polyprotein</fullName>
    </recommendedName>
    <alternativeName>
        <fullName>TY2A-TY2B</fullName>
    </alternativeName>
    <alternativeName>
        <fullName>Transposon Ty2 TYA-TYB polyprotein</fullName>
    </alternativeName>
    <component>
        <recommendedName>
            <fullName>Capsid protein</fullName>
            <shortName>CA</shortName>
        </recommendedName>
    </component>
    <component>
        <recommendedName>
            <fullName>Ty2 protease</fullName>
            <shortName>PR</shortName>
            <ecNumber>3.4.23.-</ecNumber>
        </recommendedName>
    </component>
    <component>
        <recommendedName>
            <fullName>Integrase</fullName>
            <shortName>IN</shortName>
        </recommendedName>
    </component>
    <component>
        <recommendedName>
            <fullName>Reverse transcriptase/ribonuclease H</fullName>
            <shortName>RT</shortName>
            <shortName>RT-RH</shortName>
            <ecNumber>2.7.7.49</ecNumber>
            <ecNumber>2.7.7.7</ecNumber>
            <ecNumber>3.1.26.4</ecNumber>
        </recommendedName>
    </component>
</protein>
<feature type="chain" id="PRO_0000279324" description="Transposon Ty2-LR1 Gag-Pol polyprotein">
    <location>
        <begin position="1"/>
        <end position="1770"/>
    </location>
</feature>
<feature type="chain" id="PRO_0000279325" description="Capsid protein" evidence="1">
    <location>
        <begin position="1"/>
        <end position="397"/>
    </location>
</feature>
<feature type="chain" id="PRO_0000279326" description="Ty2 protease" evidence="1">
    <location>
        <begin position="398"/>
        <end position="578"/>
    </location>
</feature>
<feature type="chain" id="PRO_0000279327" description="Integrase" evidence="1">
    <location>
        <begin position="579"/>
        <end position="1232"/>
    </location>
</feature>
<feature type="chain" id="PRO_0000279328" description="Reverse transcriptase/ribonuclease H" evidence="1">
    <location>
        <begin position="1233"/>
        <end position="1770"/>
    </location>
</feature>
<feature type="domain" description="Integrase catalytic" evidence="2">
    <location>
        <begin position="656"/>
        <end position="831"/>
    </location>
</feature>
<feature type="domain" description="Reverse transcriptase Ty1/copia-type">
    <location>
        <begin position="1353"/>
        <end position="1491"/>
    </location>
</feature>
<feature type="domain" description="RNase H Ty1/copia-type">
    <location>
        <begin position="1625"/>
        <end position="1767"/>
    </location>
</feature>
<feature type="region of interest" description="Disordered" evidence="3">
    <location>
        <begin position="1"/>
        <end position="86"/>
    </location>
</feature>
<feature type="region of interest" description="RNA-binding" evidence="1">
    <location>
        <begin position="295"/>
        <end position="397"/>
    </location>
</feature>
<feature type="region of interest" description="Disordered" evidence="3">
    <location>
        <begin position="359"/>
        <end position="453"/>
    </location>
</feature>
<feature type="region of interest" description="Integrase-type zinc finger-like">
    <location>
        <begin position="579"/>
        <end position="636"/>
    </location>
</feature>
<feature type="region of interest" description="Disordered" evidence="3">
    <location>
        <begin position="1005"/>
        <end position="1038"/>
    </location>
</feature>
<feature type="region of interest" description="Disordered" evidence="3">
    <location>
        <begin position="1058"/>
        <end position="1135"/>
    </location>
</feature>
<feature type="region of interest" description="Disordered" evidence="3">
    <location>
        <begin position="1146"/>
        <end position="1165"/>
    </location>
</feature>
<feature type="region of interest" description="Disordered" evidence="3">
    <location>
        <begin position="1170"/>
        <end position="1205"/>
    </location>
</feature>
<feature type="short sequence motif" description="Bipartite nuclear localization signal" evidence="1">
    <location>
        <begin position="1193"/>
        <end position="1227"/>
    </location>
</feature>
<feature type="compositionally biased region" description="Polar residues" evidence="3">
    <location>
        <begin position="1"/>
        <end position="11"/>
    </location>
</feature>
<feature type="compositionally biased region" description="Polar residues" evidence="3">
    <location>
        <begin position="19"/>
        <end position="39"/>
    </location>
</feature>
<feature type="compositionally biased region" description="Polar residues" evidence="3">
    <location>
        <begin position="49"/>
        <end position="60"/>
    </location>
</feature>
<feature type="compositionally biased region" description="Low complexity" evidence="3">
    <location>
        <begin position="369"/>
        <end position="381"/>
    </location>
</feature>
<feature type="compositionally biased region" description="Polar residues" evidence="3">
    <location>
        <begin position="399"/>
        <end position="408"/>
    </location>
</feature>
<feature type="compositionally biased region" description="Polar residues" evidence="3">
    <location>
        <begin position="415"/>
        <end position="435"/>
    </location>
</feature>
<feature type="compositionally biased region" description="Polar residues" evidence="3">
    <location>
        <begin position="1009"/>
        <end position="1024"/>
    </location>
</feature>
<feature type="compositionally biased region" description="Polar residues" evidence="3">
    <location>
        <begin position="1065"/>
        <end position="1082"/>
    </location>
</feature>
<feature type="compositionally biased region" description="Basic and acidic residues" evidence="3">
    <location>
        <begin position="1151"/>
        <end position="1165"/>
    </location>
</feature>
<feature type="active site" description="For protease activity; shared with dimeric partner" evidence="1">
    <location>
        <position position="457"/>
    </location>
</feature>
<feature type="binding site" evidence="2">
    <location>
        <position position="667"/>
    </location>
    <ligand>
        <name>Mg(2+)</name>
        <dbReference type="ChEBI" id="CHEBI:18420"/>
        <label>1</label>
        <note>catalytic; for integrase activity</note>
    </ligand>
</feature>
<feature type="binding site" evidence="2">
    <location>
        <position position="732"/>
    </location>
    <ligand>
        <name>Mg(2+)</name>
        <dbReference type="ChEBI" id="CHEBI:18420"/>
        <label>1</label>
        <note>catalytic; for integrase activity</note>
    </ligand>
</feature>
<feature type="binding site" evidence="2">
    <location>
        <position position="1361"/>
    </location>
    <ligand>
        <name>Mg(2+)</name>
        <dbReference type="ChEBI" id="CHEBI:18420"/>
        <label>2</label>
        <note>catalytic; for reverse transcriptase activity</note>
    </ligand>
</feature>
<feature type="binding site" evidence="2">
    <location>
        <position position="1442"/>
    </location>
    <ligand>
        <name>Mg(2+)</name>
        <dbReference type="ChEBI" id="CHEBI:18420"/>
        <label>2</label>
        <note>catalytic; for reverse transcriptase activity</note>
    </ligand>
</feature>
<feature type="binding site" evidence="2">
    <location>
        <position position="1443"/>
    </location>
    <ligand>
        <name>Mg(2+)</name>
        <dbReference type="ChEBI" id="CHEBI:18420"/>
        <label>2</label>
        <note>catalytic; for reverse transcriptase activity</note>
    </ligand>
</feature>
<feature type="binding site" evidence="2">
    <location>
        <position position="1625"/>
    </location>
    <ligand>
        <name>Mg(2+)</name>
        <dbReference type="ChEBI" id="CHEBI:18420"/>
        <label>3</label>
        <note>catalytic; for RNase H activity</note>
    </ligand>
</feature>
<feature type="binding site" evidence="2">
    <location>
        <position position="1667"/>
    </location>
    <ligand>
        <name>Mg(2+)</name>
        <dbReference type="ChEBI" id="CHEBI:18420"/>
        <label>3</label>
        <note>catalytic; for RNase H activity</note>
    </ligand>
</feature>
<feature type="binding site" evidence="2">
    <location>
        <position position="1700"/>
    </location>
    <ligand>
        <name>Mg(2+)</name>
        <dbReference type="ChEBI" id="CHEBI:18420"/>
        <label>3</label>
        <note>catalytic; for RNase H activity</note>
    </ligand>
</feature>
<feature type="site" description="Cleavage; by Ty2 protease" evidence="1">
    <location>
        <begin position="397"/>
        <end position="398"/>
    </location>
</feature>
<feature type="site" description="Cleavage; by Ty2 protease" evidence="1">
    <location>
        <begin position="578"/>
        <end position="579"/>
    </location>
</feature>
<feature type="site" description="Cleavage; by Ty2 protease" evidence="1">
    <location>
        <begin position="1232"/>
        <end position="1233"/>
    </location>
</feature>
<organism>
    <name type="scientific">Saccharomyces cerevisiae (strain ATCC 204508 / S288c)</name>
    <name type="common">Baker's yeast</name>
    <dbReference type="NCBI Taxonomy" id="559292"/>
    <lineage>
        <taxon>Eukaryota</taxon>
        <taxon>Fungi</taxon>
        <taxon>Dikarya</taxon>
        <taxon>Ascomycota</taxon>
        <taxon>Saccharomycotina</taxon>
        <taxon>Saccharomycetes</taxon>
        <taxon>Saccharomycetales</taxon>
        <taxon>Saccharomycetaceae</taxon>
        <taxon>Saccharomyces</taxon>
    </lineage>
</organism>
<dbReference type="EC" id="3.4.23.-"/>
<dbReference type="EC" id="2.7.7.49"/>
<dbReference type="EC" id="2.7.7.7"/>
<dbReference type="EC" id="3.1.26.4"/>
<dbReference type="EMBL" id="U20162">
    <property type="status" value="NOT_ANNOTATED_CDS"/>
    <property type="molecule type" value="Genomic_DNA"/>
</dbReference>
<dbReference type="EMBL" id="BK006945">
    <property type="protein sequence ID" value="DAA09711.1"/>
    <property type="molecule type" value="Genomic_DNA"/>
</dbReference>
<dbReference type="PIR" id="S69966">
    <property type="entry name" value="S69966"/>
</dbReference>
<dbReference type="RefSeq" id="NP_058174.3">
    <molecule id="P0C2J3-1"/>
    <property type="nucleotide sequence ID" value="NM_001184411.4"/>
</dbReference>
<dbReference type="BioGRID" id="31669">
    <property type="interactions" value="6"/>
</dbReference>
<dbReference type="FunCoup" id="P0C2J3">
    <property type="interactions" value="73"/>
</dbReference>
<dbReference type="IntAct" id="P0C2J3">
    <property type="interactions" value="2"/>
</dbReference>
<dbReference type="MINT" id="P0C2J3"/>
<dbReference type="PaxDb" id="4932-YLR410W-B"/>
<dbReference type="PeptideAtlas" id="P0C2J3"/>
<dbReference type="GeneID" id="851128"/>
<dbReference type="KEGG" id="sce:YLR410W-B"/>
<dbReference type="AGR" id="SGD:S000007380"/>
<dbReference type="SGD" id="S000007380">
    <property type="gene designation" value="YLR410W-B"/>
</dbReference>
<dbReference type="VEuPathDB" id="FungiDB:YLR410W-B"/>
<dbReference type="eggNOG" id="KOG0017">
    <property type="taxonomic scope" value="Eukaryota"/>
</dbReference>
<dbReference type="HOGENOM" id="CLU_244151_0_0_1"/>
<dbReference type="InParanoid" id="P0C2J3"/>
<dbReference type="OrthoDB" id="4046078at2759"/>
<dbReference type="Proteomes" id="UP000002311">
    <property type="component" value="Chromosome XII"/>
</dbReference>
<dbReference type="RNAct" id="P0C2J3">
    <property type="molecule type" value="protein"/>
</dbReference>
<dbReference type="GO" id="GO:0005737">
    <property type="term" value="C:cytoplasm"/>
    <property type="evidence" value="ECO:0007669"/>
    <property type="project" value="UniProtKB-SubCell"/>
</dbReference>
<dbReference type="GO" id="GO:0005634">
    <property type="term" value="C:nucleus"/>
    <property type="evidence" value="ECO:0000314"/>
    <property type="project" value="SGD"/>
</dbReference>
<dbReference type="GO" id="GO:0004190">
    <property type="term" value="F:aspartic-type endopeptidase activity"/>
    <property type="evidence" value="ECO:0007669"/>
    <property type="project" value="UniProtKB-KW"/>
</dbReference>
<dbReference type="GO" id="GO:0005524">
    <property type="term" value="F:ATP binding"/>
    <property type="evidence" value="ECO:0007669"/>
    <property type="project" value="UniProtKB-KW"/>
</dbReference>
<dbReference type="GO" id="GO:0003677">
    <property type="term" value="F:DNA binding"/>
    <property type="evidence" value="ECO:0007669"/>
    <property type="project" value="UniProtKB-KW"/>
</dbReference>
<dbReference type="GO" id="GO:0003887">
    <property type="term" value="F:DNA-directed DNA polymerase activity"/>
    <property type="evidence" value="ECO:0007669"/>
    <property type="project" value="UniProtKB-KW"/>
</dbReference>
<dbReference type="GO" id="GO:0003723">
    <property type="term" value="F:RNA binding"/>
    <property type="evidence" value="ECO:0007669"/>
    <property type="project" value="UniProtKB-KW"/>
</dbReference>
<dbReference type="GO" id="GO:0003964">
    <property type="term" value="F:RNA-directed DNA polymerase activity"/>
    <property type="evidence" value="ECO:0007669"/>
    <property type="project" value="UniProtKB-KW"/>
</dbReference>
<dbReference type="GO" id="GO:0004523">
    <property type="term" value="F:RNA-DNA hybrid ribonuclease activity"/>
    <property type="evidence" value="ECO:0007669"/>
    <property type="project" value="UniProtKB-EC"/>
</dbReference>
<dbReference type="GO" id="GO:0008270">
    <property type="term" value="F:zinc ion binding"/>
    <property type="evidence" value="ECO:0007669"/>
    <property type="project" value="UniProtKB-KW"/>
</dbReference>
<dbReference type="GO" id="GO:0015074">
    <property type="term" value="P:DNA integration"/>
    <property type="evidence" value="ECO:0007669"/>
    <property type="project" value="UniProtKB-KW"/>
</dbReference>
<dbReference type="GO" id="GO:0006310">
    <property type="term" value="P:DNA recombination"/>
    <property type="evidence" value="ECO:0007669"/>
    <property type="project" value="UniProtKB-KW"/>
</dbReference>
<dbReference type="GO" id="GO:0006508">
    <property type="term" value="P:proteolysis"/>
    <property type="evidence" value="ECO:0007669"/>
    <property type="project" value="UniProtKB-KW"/>
</dbReference>
<dbReference type="GO" id="GO:0032196">
    <property type="term" value="P:transposition"/>
    <property type="evidence" value="ECO:0007669"/>
    <property type="project" value="UniProtKB-KW"/>
</dbReference>
<dbReference type="GO" id="GO:0075523">
    <property type="term" value="P:viral translational frameshifting"/>
    <property type="evidence" value="ECO:0007669"/>
    <property type="project" value="UniProtKB-KW"/>
</dbReference>
<dbReference type="CDD" id="cd09272">
    <property type="entry name" value="RNase_HI_RT_Ty1"/>
    <property type="match status" value="1"/>
</dbReference>
<dbReference type="FunFam" id="3.30.420.10:FF:000050">
    <property type="entry name" value="Transposon Ty2-DR3 Gag-Pol polyprotein"/>
    <property type="match status" value="1"/>
</dbReference>
<dbReference type="Gene3D" id="3.30.420.10">
    <property type="entry name" value="Ribonuclease H-like superfamily/Ribonuclease H"/>
    <property type="match status" value="1"/>
</dbReference>
<dbReference type="InterPro" id="IPR043502">
    <property type="entry name" value="DNA/RNA_pol_sf"/>
</dbReference>
<dbReference type="InterPro" id="IPR001584">
    <property type="entry name" value="Integrase_cat-core"/>
</dbReference>
<dbReference type="InterPro" id="IPR054722">
    <property type="entry name" value="PolX-like_BBD"/>
</dbReference>
<dbReference type="InterPro" id="IPR039537">
    <property type="entry name" value="Retrotran_Ty1/copia-like"/>
</dbReference>
<dbReference type="InterPro" id="IPR012337">
    <property type="entry name" value="RNaseH-like_sf"/>
</dbReference>
<dbReference type="InterPro" id="IPR036397">
    <property type="entry name" value="RNaseH_sf"/>
</dbReference>
<dbReference type="InterPro" id="IPR013103">
    <property type="entry name" value="RVT_2"/>
</dbReference>
<dbReference type="InterPro" id="IPR015820">
    <property type="entry name" value="TYA"/>
</dbReference>
<dbReference type="PANTHER" id="PTHR42648">
    <property type="entry name" value="TRANSPOSASE, PUTATIVE-RELATED"/>
    <property type="match status" value="1"/>
</dbReference>
<dbReference type="PANTHER" id="PTHR42648:SF11">
    <property type="entry name" value="TRANSPOSON TY4-P GAG-POL POLYPROTEIN"/>
    <property type="match status" value="1"/>
</dbReference>
<dbReference type="Pfam" id="PF22936">
    <property type="entry name" value="Pol_BBD"/>
    <property type="match status" value="1"/>
</dbReference>
<dbReference type="Pfam" id="PF00665">
    <property type="entry name" value="rve"/>
    <property type="match status" value="1"/>
</dbReference>
<dbReference type="Pfam" id="PF07727">
    <property type="entry name" value="RVT_2"/>
    <property type="match status" value="1"/>
</dbReference>
<dbReference type="Pfam" id="PF01021">
    <property type="entry name" value="TYA"/>
    <property type="match status" value="1"/>
</dbReference>
<dbReference type="SUPFAM" id="SSF56672">
    <property type="entry name" value="DNA/RNA polymerases"/>
    <property type="match status" value="1"/>
</dbReference>
<dbReference type="SUPFAM" id="SSF53098">
    <property type="entry name" value="Ribonuclease H-like"/>
    <property type="match status" value="1"/>
</dbReference>
<dbReference type="PROSITE" id="PS50994">
    <property type="entry name" value="INTEGRASE"/>
    <property type="match status" value="1"/>
</dbReference>
<keyword id="KW-0064">Aspartyl protease</keyword>
<keyword id="KW-0067">ATP-binding</keyword>
<keyword id="KW-0963">Cytoplasm</keyword>
<keyword id="KW-0229">DNA integration</keyword>
<keyword id="KW-0233">DNA recombination</keyword>
<keyword id="KW-0238">DNA-binding</keyword>
<keyword id="KW-0239">DNA-directed DNA polymerase</keyword>
<keyword id="KW-0255">Endonuclease</keyword>
<keyword id="KW-0378">Hydrolase</keyword>
<keyword id="KW-0460">Magnesium</keyword>
<keyword id="KW-0479">Metal-binding</keyword>
<keyword id="KW-0511">Multifunctional enzyme</keyword>
<keyword id="KW-0540">Nuclease</keyword>
<keyword id="KW-0547">Nucleotide-binding</keyword>
<keyword id="KW-0548">Nucleotidyltransferase</keyword>
<keyword id="KW-0539">Nucleus</keyword>
<keyword id="KW-0645">Protease</keyword>
<keyword id="KW-1185">Reference proteome</keyword>
<keyword id="KW-0688">Ribosomal frameshifting</keyword>
<keyword id="KW-0694">RNA-binding</keyword>
<keyword id="KW-0695">RNA-directed DNA polymerase</keyword>
<keyword id="KW-0808">Transferase</keyword>
<keyword id="KW-0814">Transposable element</keyword>
<keyword id="KW-0815">Transposition</keyword>
<keyword id="KW-1188">Viral release from host cell</keyword>
<keyword id="KW-0917">Virion maturation</keyword>
<keyword id="KW-0862">Zinc</keyword>
<keyword id="KW-0863">Zinc-finger</keyword>